<proteinExistence type="inferred from homology"/>
<keyword id="KW-0067">ATP-binding</keyword>
<keyword id="KW-0436">Ligase</keyword>
<keyword id="KW-0547">Nucleotide-binding</keyword>
<keyword id="KW-0648">Protein biosynthesis</keyword>
<evidence type="ECO:0000255" key="1">
    <source>
        <dbReference type="HAMAP-Rule" id="MF_00121"/>
    </source>
</evidence>
<dbReference type="EC" id="6.3.5.-" evidence="1"/>
<dbReference type="EMBL" id="CP000908">
    <property type="protein sequence ID" value="ABY31453.1"/>
    <property type="molecule type" value="Genomic_DNA"/>
</dbReference>
<dbReference type="RefSeq" id="WP_012254377.1">
    <property type="nucleotide sequence ID" value="NC_010172.1"/>
</dbReference>
<dbReference type="SMR" id="A9VWZ8"/>
<dbReference type="KEGG" id="mex:Mext_3064"/>
<dbReference type="eggNOG" id="COG0064">
    <property type="taxonomic scope" value="Bacteria"/>
</dbReference>
<dbReference type="HOGENOM" id="CLU_019240_1_1_5"/>
<dbReference type="BioCyc" id="MEXT419610:MEXT_RS15425-MONOMER"/>
<dbReference type="GO" id="GO:0050566">
    <property type="term" value="F:asparaginyl-tRNA synthase (glutamine-hydrolyzing) activity"/>
    <property type="evidence" value="ECO:0007669"/>
    <property type="project" value="RHEA"/>
</dbReference>
<dbReference type="GO" id="GO:0005524">
    <property type="term" value="F:ATP binding"/>
    <property type="evidence" value="ECO:0007669"/>
    <property type="project" value="UniProtKB-KW"/>
</dbReference>
<dbReference type="GO" id="GO:0050567">
    <property type="term" value="F:glutaminyl-tRNA synthase (glutamine-hydrolyzing) activity"/>
    <property type="evidence" value="ECO:0007669"/>
    <property type="project" value="UniProtKB-UniRule"/>
</dbReference>
<dbReference type="GO" id="GO:0070681">
    <property type="term" value="P:glutaminyl-tRNAGln biosynthesis via transamidation"/>
    <property type="evidence" value="ECO:0007669"/>
    <property type="project" value="TreeGrafter"/>
</dbReference>
<dbReference type="GO" id="GO:0006412">
    <property type="term" value="P:translation"/>
    <property type="evidence" value="ECO:0007669"/>
    <property type="project" value="UniProtKB-UniRule"/>
</dbReference>
<dbReference type="FunFam" id="1.10.10.410:FF:000001">
    <property type="entry name" value="Aspartyl/glutamyl-tRNA(Asn/Gln) amidotransferase subunit B"/>
    <property type="match status" value="1"/>
</dbReference>
<dbReference type="FunFam" id="1.10.150.380:FF:000001">
    <property type="entry name" value="Aspartyl/glutamyl-tRNA(Asn/Gln) amidotransferase subunit B"/>
    <property type="match status" value="1"/>
</dbReference>
<dbReference type="Gene3D" id="1.10.10.410">
    <property type="match status" value="1"/>
</dbReference>
<dbReference type="Gene3D" id="1.10.150.380">
    <property type="entry name" value="GatB domain, N-terminal subdomain"/>
    <property type="match status" value="1"/>
</dbReference>
<dbReference type="HAMAP" id="MF_00121">
    <property type="entry name" value="GatB"/>
    <property type="match status" value="1"/>
</dbReference>
<dbReference type="InterPro" id="IPR017959">
    <property type="entry name" value="Asn/Gln-tRNA_amidoTrfase_suB/E"/>
</dbReference>
<dbReference type="InterPro" id="IPR006075">
    <property type="entry name" value="Asn/Gln-tRNA_Trfase_suB/E_cat"/>
</dbReference>
<dbReference type="InterPro" id="IPR018027">
    <property type="entry name" value="Asn/Gln_amidotransferase"/>
</dbReference>
<dbReference type="InterPro" id="IPR003789">
    <property type="entry name" value="Asn/Gln_tRNA_amidoTrase-B-like"/>
</dbReference>
<dbReference type="InterPro" id="IPR004413">
    <property type="entry name" value="GatB"/>
</dbReference>
<dbReference type="InterPro" id="IPR042114">
    <property type="entry name" value="GatB_C_1"/>
</dbReference>
<dbReference type="InterPro" id="IPR023168">
    <property type="entry name" value="GatB_Yqey_C_2"/>
</dbReference>
<dbReference type="InterPro" id="IPR017958">
    <property type="entry name" value="Gln-tRNA_amidoTrfase_suB_CS"/>
</dbReference>
<dbReference type="InterPro" id="IPR014746">
    <property type="entry name" value="Gln_synth/guanido_kin_cat_dom"/>
</dbReference>
<dbReference type="NCBIfam" id="TIGR00133">
    <property type="entry name" value="gatB"/>
    <property type="match status" value="1"/>
</dbReference>
<dbReference type="NCBIfam" id="NF004012">
    <property type="entry name" value="PRK05477.1-2"/>
    <property type="match status" value="1"/>
</dbReference>
<dbReference type="NCBIfam" id="NF004014">
    <property type="entry name" value="PRK05477.1-4"/>
    <property type="match status" value="1"/>
</dbReference>
<dbReference type="NCBIfam" id="NF004015">
    <property type="entry name" value="PRK05477.1-5"/>
    <property type="match status" value="1"/>
</dbReference>
<dbReference type="PANTHER" id="PTHR11659">
    <property type="entry name" value="GLUTAMYL-TRNA GLN AMIDOTRANSFERASE SUBUNIT B MITOCHONDRIAL AND PROKARYOTIC PET112-RELATED"/>
    <property type="match status" value="1"/>
</dbReference>
<dbReference type="PANTHER" id="PTHR11659:SF0">
    <property type="entry name" value="GLUTAMYL-TRNA(GLN) AMIDOTRANSFERASE SUBUNIT B, MITOCHONDRIAL"/>
    <property type="match status" value="1"/>
</dbReference>
<dbReference type="Pfam" id="PF02934">
    <property type="entry name" value="GatB_N"/>
    <property type="match status" value="1"/>
</dbReference>
<dbReference type="Pfam" id="PF02637">
    <property type="entry name" value="GatB_Yqey"/>
    <property type="match status" value="1"/>
</dbReference>
<dbReference type="SMART" id="SM00845">
    <property type="entry name" value="GatB_Yqey"/>
    <property type="match status" value="1"/>
</dbReference>
<dbReference type="SUPFAM" id="SSF89095">
    <property type="entry name" value="GatB/YqeY motif"/>
    <property type="match status" value="1"/>
</dbReference>
<dbReference type="SUPFAM" id="SSF55931">
    <property type="entry name" value="Glutamine synthetase/guanido kinase"/>
    <property type="match status" value="1"/>
</dbReference>
<dbReference type="PROSITE" id="PS01234">
    <property type="entry name" value="GATB"/>
    <property type="match status" value="1"/>
</dbReference>
<organism>
    <name type="scientific">Methylorubrum extorquens (strain PA1)</name>
    <name type="common">Methylobacterium extorquens</name>
    <dbReference type="NCBI Taxonomy" id="419610"/>
    <lineage>
        <taxon>Bacteria</taxon>
        <taxon>Pseudomonadati</taxon>
        <taxon>Pseudomonadota</taxon>
        <taxon>Alphaproteobacteria</taxon>
        <taxon>Hyphomicrobiales</taxon>
        <taxon>Methylobacteriaceae</taxon>
        <taxon>Methylorubrum</taxon>
    </lineage>
</organism>
<reference key="1">
    <citation type="submission" date="2007-12" db="EMBL/GenBank/DDBJ databases">
        <title>Complete sequence of Methylobacterium extorquens PA1.</title>
        <authorList>
            <consortium name="US DOE Joint Genome Institute"/>
            <person name="Copeland A."/>
            <person name="Lucas S."/>
            <person name="Lapidus A."/>
            <person name="Barry K."/>
            <person name="Glavina del Rio T."/>
            <person name="Dalin E."/>
            <person name="Tice H."/>
            <person name="Pitluck S."/>
            <person name="Saunders E."/>
            <person name="Brettin T."/>
            <person name="Bruce D."/>
            <person name="Detter J.C."/>
            <person name="Han C."/>
            <person name="Schmutz J."/>
            <person name="Larimer F."/>
            <person name="Land M."/>
            <person name="Hauser L."/>
            <person name="Kyrpides N."/>
            <person name="Kim E."/>
            <person name="Marx C."/>
            <person name="Richardson P."/>
        </authorList>
    </citation>
    <scope>NUCLEOTIDE SEQUENCE [LARGE SCALE GENOMIC DNA]</scope>
    <source>
        <strain>PA1</strain>
    </source>
</reference>
<accession>A9VWZ8</accession>
<feature type="chain" id="PRO_1000095220" description="Aspartyl/glutamyl-tRNA(Asn/Gln) amidotransferase subunit B">
    <location>
        <begin position="1"/>
        <end position="490"/>
    </location>
</feature>
<sequence>MTERVDPKKLIKGGLHDWEVVIGMEIHAQVTSRSKLFSGASTEFGGEPNDHVSLVDAAMPGMLPVINEECVAQAVRTGLGLKAQINLRSVFDRKNYFYPDLPQGYQISQYKDPIVGEGEVLVDLPEGESMTVGIERLHLEQDAGKSLHDQDPTKSFVDLNRSGVALMEIVSRPDLRSSEEARAYVTKLRTILRYLGTCDGDMEKGSLRADVNVSVRRPGEPLGTRCEIKNVNSIRFIGQAIETEARRQIAILEDGGKIDQETRLYDPGKGETRSMRSKEEAHDYRYFPDPDLLPLEFDQAYVDALASGLPELPDAKKARFIKDFGLSAYDAGVLVAERASADYFEAVARGRDGKAAANWVINELFGRLNKEGRSIEDTPVSAEQLGTIVDLIGDGVISGKIAKDLFEIVWSEGGDPRAIVEARGMKQVTDTGAIEAAVDAIIAANPDKVEQAKAKPTLLGWFVGQTMKATGGKANPAAVNALLKDKLGIE</sequence>
<name>GATB_METEP</name>
<comment type="function">
    <text evidence="1">Allows the formation of correctly charged Asn-tRNA(Asn) or Gln-tRNA(Gln) through the transamidation of misacylated Asp-tRNA(Asn) or Glu-tRNA(Gln) in organisms which lack either or both of asparaginyl-tRNA or glutaminyl-tRNA synthetases. The reaction takes place in the presence of glutamine and ATP through an activated phospho-Asp-tRNA(Asn) or phospho-Glu-tRNA(Gln).</text>
</comment>
<comment type="catalytic activity">
    <reaction evidence="1">
        <text>L-glutamyl-tRNA(Gln) + L-glutamine + ATP + H2O = L-glutaminyl-tRNA(Gln) + L-glutamate + ADP + phosphate + H(+)</text>
        <dbReference type="Rhea" id="RHEA:17521"/>
        <dbReference type="Rhea" id="RHEA-COMP:9681"/>
        <dbReference type="Rhea" id="RHEA-COMP:9684"/>
        <dbReference type="ChEBI" id="CHEBI:15377"/>
        <dbReference type="ChEBI" id="CHEBI:15378"/>
        <dbReference type="ChEBI" id="CHEBI:29985"/>
        <dbReference type="ChEBI" id="CHEBI:30616"/>
        <dbReference type="ChEBI" id="CHEBI:43474"/>
        <dbReference type="ChEBI" id="CHEBI:58359"/>
        <dbReference type="ChEBI" id="CHEBI:78520"/>
        <dbReference type="ChEBI" id="CHEBI:78521"/>
        <dbReference type="ChEBI" id="CHEBI:456216"/>
    </reaction>
</comment>
<comment type="catalytic activity">
    <reaction evidence="1">
        <text>L-aspartyl-tRNA(Asn) + L-glutamine + ATP + H2O = L-asparaginyl-tRNA(Asn) + L-glutamate + ADP + phosphate + 2 H(+)</text>
        <dbReference type="Rhea" id="RHEA:14513"/>
        <dbReference type="Rhea" id="RHEA-COMP:9674"/>
        <dbReference type="Rhea" id="RHEA-COMP:9677"/>
        <dbReference type="ChEBI" id="CHEBI:15377"/>
        <dbReference type="ChEBI" id="CHEBI:15378"/>
        <dbReference type="ChEBI" id="CHEBI:29985"/>
        <dbReference type="ChEBI" id="CHEBI:30616"/>
        <dbReference type="ChEBI" id="CHEBI:43474"/>
        <dbReference type="ChEBI" id="CHEBI:58359"/>
        <dbReference type="ChEBI" id="CHEBI:78515"/>
        <dbReference type="ChEBI" id="CHEBI:78516"/>
        <dbReference type="ChEBI" id="CHEBI:456216"/>
    </reaction>
</comment>
<comment type="subunit">
    <text evidence="1">Heterotrimer of A, B and C subunits.</text>
</comment>
<comment type="similarity">
    <text evidence="1">Belongs to the GatB/GatE family. GatB subfamily.</text>
</comment>
<protein>
    <recommendedName>
        <fullName evidence="1">Aspartyl/glutamyl-tRNA(Asn/Gln) amidotransferase subunit B</fullName>
        <shortName evidence="1">Asp/Glu-ADT subunit B</shortName>
        <ecNumber evidence="1">6.3.5.-</ecNumber>
    </recommendedName>
</protein>
<gene>
    <name evidence="1" type="primary">gatB</name>
    <name type="ordered locus">Mext_3064</name>
</gene>